<gene>
    <name evidence="1" type="primary">metXS</name>
    <name type="ordered locus">PST_3970</name>
</gene>
<name>METXS_STUS1</name>
<keyword id="KW-0012">Acyltransferase</keyword>
<keyword id="KW-0028">Amino-acid biosynthesis</keyword>
<keyword id="KW-0963">Cytoplasm</keyword>
<keyword id="KW-0486">Methionine biosynthesis</keyword>
<keyword id="KW-1185">Reference proteome</keyword>
<keyword id="KW-0808">Transferase</keyword>
<evidence type="ECO:0000255" key="1">
    <source>
        <dbReference type="HAMAP-Rule" id="MF_00296"/>
    </source>
</evidence>
<proteinExistence type="inferred from homology"/>
<protein>
    <recommendedName>
        <fullName evidence="1">Homoserine O-succinyltransferase</fullName>
        <shortName evidence="1">HST</shortName>
        <ecNumber evidence="1">2.3.1.46</ecNumber>
    </recommendedName>
    <alternativeName>
        <fullName evidence="1">Homoserine transsuccinylase</fullName>
        <shortName evidence="1">HTS</shortName>
    </alternativeName>
</protein>
<organism>
    <name type="scientific">Stutzerimonas stutzeri (strain A1501)</name>
    <name type="common">Pseudomonas stutzeri</name>
    <dbReference type="NCBI Taxonomy" id="379731"/>
    <lineage>
        <taxon>Bacteria</taxon>
        <taxon>Pseudomonadati</taxon>
        <taxon>Pseudomonadota</taxon>
        <taxon>Gammaproteobacteria</taxon>
        <taxon>Pseudomonadales</taxon>
        <taxon>Pseudomonadaceae</taxon>
        <taxon>Stutzerimonas</taxon>
    </lineage>
</organism>
<comment type="function">
    <text evidence="1">Transfers a succinyl group from succinyl-CoA to L-homoserine, forming succinyl-L-homoserine.</text>
</comment>
<comment type="catalytic activity">
    <reaction evidence="1">
        <text>L-homoserine + succinyl-CoA = O-succinyl-L-homoserine + CoA</text>
        <dbReference type="Rhea" id="RHEA:22008"/>
        <dbReference type="ChEBI" id="CHEBI:57287"/>
        <dbReference type="ChEBI" id="CHEBI:57292"/>
        <dbReference type="ChEBI" id="CHEBI:57476"/>
        <dbReference type="ChEBI" id="CHEBI:57661"/>
        <dbReference type="EC" id="2.3.1.46"/>
    </reaction>
</comment>
<comment type="pathway">
    <text evidence="1">Amino-acid biosynthesis; L-methionine biosynthesis via de novo pathway; O-succinyl-L-homoserine from L-homoserine: step 1/1.</text>
</comment>
<comment type="subunit">
    <text evidence="1">Homodimer.</text>
</comment>
<comment type="subcellular location">
    <subcellularLocation>
        <location evidence="1">Cytoplasm</location>
    </subcellularLocation>
</comment>
<comment type="similarity">
    <text evidence="1">Belongs to the AB hydrolase superfamily. MetX family.</text>
</comment>
<sequence>MPTAIPADSVGLVSPQVAHFAEPLTLACGRTLADYQLIYETYGELNAARSNAVLICHALSGHHHAAGYHSEDDRKPGWWDSCIGPGKAIDTDRFFVVSLNNLGGCNGSTGPSSTNPATGKPYGADFPVVTVEDWVHSQARLADRLGINQWAAVVGGSLGGMQALQWAISYPERVRHCLAIASAPKLSAQNIAFNEVARQAILSDPEFHGGHFQEMGVIPKRGLMLARMVGHITYLSDDAMGTKFGRGLKSEKLNYDFNSVEFQVESYLRYQGEEFSGRFDANTYLLMTKALDYFDPAAANDDDLARTFEVAQADFCVMSFTTDWRFSPERSREIVDALLAARKNVCYLEIDAPQGHDAFLIPNPRYLQAFRGYMNRIAV</sequence>
<dbReference type="EC" id="2.3.1.46" evidence="1"/>
<dbReference type="EMBL" id="CP000304">
    <property type="protein sequence ID" value="ABP81593.1"/>
    <property type="molecule type" value="Genomic_DNA"/>
</dbReference>
<dbReference type="RefSeq" id="WP_011914975.1">
    <property type="nucleotide sequence ID" value="NC_009434.1"/>
</dbReference>
<dbReference type="SMR" id="A4VRJ2"/>
<dbReference type="ESTHER" id="pseu5-metx">
    <property type="family name" value="Homoserine_transacetylase"/>
</dbReference>
<dbReference type="KEGG" id="psa:PST_3970"/>
<dbReference type="eggNOG" id="COG2021">
    <property type="taxonomic scope" value="Bacteria"/>
</dbReference>
<dbReference type="HOGENOM" id="CLU_028760_1_2_6"/>
<dbReference type="UniPathway" id="UPA00051">
    <property type="reaction ID" value="UER00075"/>
</dbReference>
<dbReference type="Proteomes" id="UP000000233">
    <property type="component" value="Chromosome"/>
</dbReference>
<dbReference type="GO" id="GO:0005737">
    <property type="term" value="C:cytoplasm"/>
    <property type="evidence" value="ECO:0007669"/>
    <property type="project" value="UniProtKB-SubCell"/>
</dbReference>
<dbReference type="GO" id="GO:0004414">
    <property type="term" value="F:homoserine O-acetyltransferase activity"/>
    <property type="evidence" value="ECO:0007669"/>
    <property type="project" value="TreeGrafter"/>
</dbReference>
<dbReference type="GO" id="GO:0008899">
    <property type="term" value="F:homoserine O-succinyltransferase activity"/>
    <property type="evidence" value="ECO:0007669"/>
    <property type="project" value="UniProtKB-UniRule"/>
</dbReference>
<dbReference type="GO" id="GO:0009092">
    <property type="term" value="P:homoserine metabolic process"/>
    <property type="evidence" value="ECO:0007669"/>
    <property type="project" value="TreeGrafter"/>
</dbReference>
<dbReference type="GO" id="GO:0009086">
    <property type="term" value="P:methionine biosynthetic process"/>
    <property type="evidence" value="ECO:0007669"/>
    <property type="project" value="UniProtKB-UniRule"/>
</dbReference>
<dbReference type="FunFam" id="1.10.1740.110:FF:000001">
    <property type="entry name" value="Homoserine O-acetyltransferase"/>
    <property type="match status" value="1"/>
</dbReference>
<dbReference type="Gene3D" id="1.10.1740.110">
    <property type="match status" value="1"/>
</dbReference>
<dbReference type="Gene3D" id="3.40.50.1820">
    <property type="entry name" value="alpha/beta hydrolase"/>
    <property type="match status" value="1"/>
</dbReference>
<dbReference type="HAMAP" id="MF_00296">
    <property type="entry name" value="MetX_acyltransf"/>
    <property type="match status" value="1"/>
</dbReference>
<dbReference type="InterPro" id="IPR000073">
    <property type="entry name" value="AB_hydrolase_1"/>
</dbReference>
<dbReference type="InterPro" id="IPR029058">
    <property type="entry name" value="AB_hydrolase_fold"/>
</dbReference>
<dbReference type="InterPro" id="IPR008220">
    <property type="entry name" value="HAT_MetX-like"/>
</dbReference>
<dbReference type="NCBIfam" id="TIGR01392">
    <property type="entry name" value="homoserO_Ac_trn"/>
    <property type="match status" value="1"/>
</dbReference>
<dbReference type="NCBIfam" id="NF001209">
    <property type="entry name" value="PRK00175.1"/>
    <property type="match status" value="1"/>
</dbReference>
<dbReference type="PANTHER" id="PTHR32268">
    <property type="entry name" value="HOMOSERINE O-ACETYLTRANSFERASE"/>
    <property type="match status" value="1"/>
</dbReference>
<dbReference type="PANTHER" id="PTHR32268:SF11">
    <property type="entry name" value="HOMOSERINE O-ACETYLTRANSFERASE"/>
    <property type="match status" value="1"/>
</dbReference>
<dbReference type="Pfam" id="PF00561">
    <property type="entry name" value="Abhydrolase_1"/>
    <property type="match status" value="1"/>
</dbReference>
<dbReference type="PIRSF" id="PIRSF000443">
    <property type="entry name" value="Homoser_Ac_trans"/>
    <property type="match status" value="1"/>
</dbReference>
<dbReference type="SUPFAM" id="SSF53474">
    <property type="entry name" value="alpha/beta-Hydrolases"/>
    <property type="match status" value="1"/>
</dbReference>
<reference key="1">
    <citation type="journal article" date="2008" name="Proc. Natl. Acad. Sci. U.S.A.">
        <title>Nitrogen fixation island and rhizosphere competence traits in the genome of root-associated Pseudomonas stutzeri A1501.</title>
        <authorList>
            <person name="Yan Y."/>
            <person name="Yang J."/>
            <person name="Dou Y."/>
            <person name="Chen M."/>
            <person name="Ping S."/>
            <person name="Peng J."/>
            <person name="Lu W."/>
            <person name="Zhang W."/>
            <person name="Yao Z."/>
            <person name="Li H."/>
            <person name="Liu W."/>
            <person name="He S."/>
            <person name="Geng L."/>
            <person name="Zhang X."/>
            <person name="Yang F."/>
            <person name="Yu H."/>
            <person name="Zhan Y."/>
            <person name="Li D."/>
            <person name="Lin Z."/>
            <person name="Wang Y."/>
            <person name="Elmerich C."/>
            <person name="Lin M."/>
            <person name="Jin Q."/>
        </authorList>
    </citation>
    <scope>NUCLEOTIDE SEQUENCE [LARGE SCALE GENOMIC DNA]</scope>
    <source>
        <strain>A1501</strain>
    </source>
</reference>
<accession>A4VRJ2</accession>
<feature type="chain" id="PRO_1000021898" description="Homoserine O-succinyltransferase">
    <location>
        <begin position="1"/>
        <end position="379"/>
    </location>
</feature>
<feature type="domain" description="AB hydrolase-1" evidence="1">
    <location>
        <begin position="51"/>
        <end position="360"/>
    </location>
</feature>
<feature type="active site" description="Nucleophile" evidence="1">
    <location>
        <position position="157"/>
    </location>
</feature>
<feature type="active site" evidence="1">
    <location>
        <position position="323"/>
    </location>
</feature>
<feature type="active site" evidence="1">
    <location>
        <position position="356"/>
    </location>
</feature>
<feature type="binding site" evidence="1">
    <location>
        <position position="227"/>
    </location>
    <ligand>
        <name>substrate</name>
    </ligand>
</feature>
<feature type="binding site" evidence="1">
    <location>
        <position position="357"/>
    </location>
    <ligand>
        <name>substrate</name>
    </ligand>
</feature>
<feature type="site" description="Important for acyl-CoA specificity" evidence="1">
    <location>
        <position position="325"/>
    </location>
</feature>